<keyword id="KW-0134">Cell wall</keyword>
<keyword id="KW-0536">Nodulation</keyword>
<keyword id="KW-0677">Repeat</keyword>
<keyword id="KW-0964">Secreted</keyword>
<keyword id="KW-0732">Signal</keyword>
<comment type="function">
    <text>Involved in the infection process during the plant-rhizobium interaction. May also have an additional function in the proliferation of the bacteria.</text>
</comment>
<comment type="subcellular location">
    <subcellularLocation>
        <location evidence="3">Secreted</location>
        <location evidence="3">Cell wall</location>
    </subcellularLocation>
</comment>
<comment type="developmental stage">
    <text>Expressed during rhizobium-induced nodule formation. In 4-day old nodules it is found in all the cells of the center of the nodule primordium and also occurs in the root cortical cells containing the infection thread. At day 5, expression is seen in the complete central tissue and at day 20, expressed in the complete prefixation zone II and is present at a similar level throughout the zone. In the distal part of the prefixation zone II it is probably expressed in all cells, whereas in the proximal part, found only in the infected cells. Expression decreases at the transition of prefixation zone II into interzone II-III.</text>
</comment>
<comment type="similarity">
    <text evidence="3">Belongs to the plant proline-rich protein superfamily. ENOD12 family.</text>
</comment>
<comment type="sequence caution" evidence="3">
    <conflict type="erroneous initiation">
        <sequence resource="EMBL-CDS" id="CAA58653"/>
    </conflict>
</comment>
<protein>
    <recommendedName>
        <fullName>Early nodulin-12</fullName>
        <shortName>N-12</shortName>
    </recommendedName>
</protein>
<sequence length="100" mass="11297">MASFLLSTLVFFLAALILVPQGLAQYHLNPVYEAPVNGPPVNKPPQKETPVQKPPQKEPPVHKSPRNEPPRHKPPHKKSHLHVTKRSYGKHATEEHSIHF</sequence>
<reference key="1">
    <citation type="journal article" date="1995" name="Plant Mol. Biol.">
        <title>VsENOD5, VsENOD12 and VsENOD40 expression during Rhizobium-induced nodule formation on Vicia sativa roots.</title>
        <authorList>
            <person name="Vijn I."/>
            <person name="Yang W.-C."/>
            <person name="Pallisgaard N."/>
            <person name="Oestergaard Jensen E."/>
            <person name="van Kammen A."/>
            <person name="Bisseling T."/>
        </authorList>
    </citation>
    <scope>NUCLEOTIDE SEQUENCE [MRNA]</scope>
    <source>
        <strain>cv. Nigra</strain>
        <tissue>Root nodule</tissue>
    </source>
</reference>
<dbReference type="EMBL" id="X83682">
    <property type="protein sequence ID" value="CAA58653.1"/>
    <property type="status" value="ALT_INIT"/>
    <property type="molecule type" value="mRNA"/>
</dbReference>
<dbReference type="PIR" id="S60045">
    <property type="entry name" value="S60045"/>
</dbReference>
<dbReference type="SMR" id="Q41701"/>
<dbReference type="GO" id="GO:0005576">
    <property type="term" value="C:extracellular region"/>
    <property type="evidence" value="ECO:0007669"/>
    <property type="project" value="UniProtKB-KW"/>
</dbReference>
<dbReference type="GO" id="GO:0009877">
    <property type="term" value="P:nodulation"/>
    <property type="evidence" value="ECO:0007669"/>
    <property type="project" value="UniProtKB-KW"/>
</dbReference>
<dbReference type="InterPro" id="IPR051308">
    <property type="entry name" value="Proline-rich_CW_protein"/>
</dbReference>
<dbReference type="PANTHER" id="PTHR34629">
    <property type="entry name" value="PROLINE-RICH EXTENSIN-LIKE PROTEIN EPR1"/>
    <property type="match status" value="1"/>
</dbReference>
<dbReference type="PANTHER" id="PTHR34629:SF4">
    <property type="entry name" value="REPETITIVE PROLINE-RICH CELL WALL PROTEIN 3"/>
    <property type="match status" value="1"/>
</dbReference>
<feature type="signal peptide" evidence="1">
    <location>
        <begin position="1"/>
        <end position="24"/>
    </location>
</feature>
<feature type="chain" id="PRO_0000019806" description="Early nodulin-12">
    <location>
        <begin position="25"/>
        <end position="100"/>
    </location>
</feature>
<feature type="repeat" description="1">
    <location>
        <begin position="39"/>
        <end position="43"/>
    </location>
</feature>
<feature type="repeat" description="2">
    <location>
        <begin position="44"/>
        <end position="48"/>
    </location>
</feature>
<feature type="repeat" description="3; approximate">
    <location>
        <begin position="49"/>
        <end position="53"/>
    </location>
</feature>
<feature type="repeat" description="4">
    <location>
        <begin position="54"/>
        <end position="58"/>
    </location>
</feature>
<feature type="repeat" description="5">
    <location>
        <begin position="59"/>
        <end position="63"/>
    </location>
</feature>
<feature type="repeat" description="6; approximate">
    <location>
        <begin position="64"/>
        <end position="68"/>
    </location>
</feature>
<feature type="repeat" description="7">
    <location>
        <begin position="69"/>
        <end position="73"/>
    </location>
</feature>
<feature type="repeat" description="8">
    <location>
        <begin position="74"/>
        <end position="78"/>
    </location>
</feature>
<feature type="region of interest" description="Disordered" evidence="2">
    <location>
        <begin position="32"/>
        <end position="100"/>
    </location>
</feature>
<feature type="region of interest" description="8 X 5 AA approximate tandem repeats of P-P-[VQHR]-[NKH]-[EK]">
    <location>
        <begin position="39"/>
        <end position="78"/>
    </location>
</feature>
<feature type="compositionally biased region" description="Basic and acidic residues" evidence="2">
    <location>
        <begin position="55"/>
        <end position="71"/>
    </location>
</feature>
<feature type="compositionally biased region" description="Basic residues" evidence="2">
    <location>
        <begin position="72"/>
        <end position="89"/>
    </location>
</feature>
<feature type="compositionally biased region" description="Basic and acidic residues" evidence="2">
    <location>
        <begin position="91"/>
        <end position="100"/>
    </location>
</feature>
<name>NO12_VICSA</name>
<evidence type="ECO:0000255" key="1"/>
<evidence type="ECO:0000256" key="2">
    <source>
        <dbReference type="SAM" id="MobiDB-lite"/>
    </source>
</evidence>
<evidence type="ECO:0000305" key="3"/>
<accession>Q41701</accession>
<organism>
    <name type="scientific">Vicia sativa</name>
    <name type="common">Spring vetch</name>
    <name type="synonym">Tare</name>
    <dbReference type="NCBI Taxonomy" id="3908"/>
    <lineage>
        <taxon>Eukaryota</taxon>
        <taxon>Viridiplantae</taxon>
        <taxon>Streptophyta</taxon>
        <taxon>Embryophyta</taxon>
        <taxon>Tracheophyta</taxon>
        <taxon>Spermatophyta</taxon>
        <taxon>Magnoliopsida</taxon>
        <taxon>eudicotyledons</taxon>
        <taxon>Gunneridae</taxon>
        <taxon>Pentapetalae</taxon>
        <taxon>rosids</taxon>
        <taxon>fabids</taxon>
        <taxon>Fabales</taxon>
        <taxon>Fabaceae</taxon>
        <taxon>Papilionoideae</taxon>
        <taxon>50 kb inversion clade</taxon>
        <taxon>NPAAA clade</taxon>
        <taxon>Hologalegina</taxon>
        <taxon>IRL clade</taxon>
        <taxon>Fabeae</taxon>
        <taxon>Vicia</taxon>
    </lineage>
</organism>
<gene>
    <name type="primary">ENOD12</name>
</gene>
<proteinExistence type="evidence at transcript level"/>